<protein>
    <recommendedName>
        <fullName evidence="1">Large ribosomal subunit protein bL36c</fullName>
    </recommendedName>
    <alternativeName>
        <fullName evidence="2">50S ribosomal protein L36, chloroplastic</fullName>
    </alternativeName>
</protein>
<evidence type="ECO:0000255" key="1">
    <source>
        <dbReference type="HAMAP-Rule" id="MF_00251"/>
    </source>
</evidence>
<evidence type="ECO:0000305" key="2"/>
<proteinExistence type="inferred from homology"/>
<gene>
    <name evidence="1" type="primary">rpl36</name>
</gene>
<geneLocation type="chloroplast"/>
<reference key="1">
    <citation type="journal article" date="2003" name="Plant Syst. Evol.">
        <title>The chloroplast genome of the 'basal' angiosperm Calycanthus fertilis -- structural and phylogenetic analyses.</title>
        <authorList>
            <person name="Goremykin V."/>
            <person name="Hirsch-Ernst K.I."/>
            <person name="Woelfl S."/>
            <person name="Hellwig F.H."/>
        </authorList>
    </citation>
    <scope>NUCLEOTIDE SEQUENCE [LARGE SCALE GENOMIC DNA]</scope>
</reference>
<name>RK36_CALFG</name>
<sequence length="37" mass="4460">MKIRASVRKICEKCRLIRRRGRIIVICSNPRHKQRQG</sequence>
<dbReference type="EMBL" id="AJ428413">
    <property type="protein sequence ID" value="CAD28754.1"/>
    <property type="molecule type" value="Genomic_DNA"/>
</dbReference>
<dbReference type="RefSeq" id="NP_862787.1">
    <property type="nucleotide sequence ID" value="NC_004993.1"/>
</dbReference>
<dbReference type="SMR" id="Q7HKX4"/>
<dbReference type="GeneID" id="2598030"/>
<dbReference type="GO" id="GO:0009507">
    <property type="term" value="C:chloroplast"/>
    <property type="evidence" value="ECO:0007669"/>
    <property type="project" value="UniProtKB-SubCell"/>
</dbReference>
<dbReference type="GO" id="GO:1990904">
    <property type="term" value="C:ribonucleoprotein complex"/>
    <property type="evidence" value="ECO:0007669"/>
    <property type="project" value="UniProtKB-KW"/>
</dbReference>
<dbReference type="GO" id="GO:0005840">
    <property type="term" value="C:ribosome"/>
    <property type="evidence" value="ECO:0007669"/>
    <property type="project" value="UniProtKB-KW"/>
</dbReference>
<dbReference type="GO" id="GO:0003735">
    <property type="term" value="F:structural constituent of ribosome"/>
    <property type="evidence" value="ECO:0007669"/>
    <property type="project" value="InterPro"/>
</dbReference>
<dbReference type="GO" id="GO:0006412">
    <property type="term" value="P:translation"/>
    <property type="evidence" value="ECO:0007669"/>
    <property type="project" value="UniProtKB-UniRule"/>
</dbReference>
<dbReference type="HAMAP" id="MF_00251">
    <property type="entry name" value="Ribosomal_bL36"/>
    <property type="match status" value="1"/>
</dbReference>
<dbReference type="InterPro" id="IPR000473">
    <property type="entry name" value="Ribosomal_bL36"/>
</dbReference>
<dbReference type="InterPro" id="IPR035977">
    <property type="entry name" value="Ribosomal_bL36_sp"/>
</dbReference>
<dbReference type="NCBIfam" id="TIGR01022">
    <property type="entry name" value="rpmJ_bact"/>
    <property type="match status" value="1"/>
</dbReference>
<dbReference type="PANTHER" id="PTHR42888">
    <property type="entry name" value="50S RIBOSOMAL PROTEIN L36, CHLOROPLASTIC"/>
    <property type="match status" value="1"/>
</dbReference>
<dbReference type="PANTHER" id="PTHR42888:SF1">
    <property type="entry name" value="LARGE RIBOSOMAL SUBUNIT PROTEIN BL36C"/>
    <property type="match status" value="1"/>
</dbReference>
<dbReference type="Pfam" id="PF00444">
    <property type="entry name" value="Ribosomal_L36"/>
    <property type="match status" value="1"/>
</dbReference>
<dbReference type="SUPFAM" id="SSF57840">
    <property type="entry name" value="Ribosomal protein L36"/>
    <property type="match status" value="1"/>
</dbReference>
<dbReference type="PROSITE" id="PS00828">
    <property type="entry name" value="RIBOSOMAL_L36"/>
    <property type="match status" value="1"/>
</dbReference>
<comment type="subcellular location">
    <subcellularLocation>
        <location>Plastid</location>
        <location>Chloroplast</location>
    </subcellularLocation>
</comment>
<comment type="similarity">
    <text evidence="1">Belongs to the bacterial ribosomal protein bL36 family.</text>
</comment>
<keyword id="KW-0150">Chloroplast</keyword>
<keyword id="KW-0934">Plastid</keyword>
<keyword id="KW-0687">Ribonucleoprotein</keyword>
<keyword id="KW-0689">Ribosomal protein</keyword>
<feature type="chain" id="PRO_0000126313" description="Large ribosomal subunit protein bL36c">
    <location>
        <begin position="1"/>
        <end position="37"/>
    </location>
</feature>
<accession>Q7HKX4</accession>
<organism>
    <name type="scientific">Calycanthus floridus var. glaucus</name>
    <name type="common">Eastern sweetshrub</name>
    <name type="synonym">Calycanthus fertilis var. ferax</name>
    <dbReference type="NCBI Taxonomy" id="212734"/>
    <lineage>
        <taxon>Eukaryota</taxon>
        <taxon>Viridiplantae</taxon>
        <taxon>Streptophyta</taxon>
        <taxon>Embryophyta</taxon>
        <taxon>Tracheophyta</taxon>
        <taxon>Spermatophyta</taxon>
        <taxon>Magnoliopsida</taxon>
        <taxon>Magnoliidae</taxon>
        <taxon>Laurales</taxon>
        <taxon>Calycanthaceae</taxon>
        <taxon>Calycanthus</taxon>
    </lineage>
</organism>